<name>ACTB_CANLF</name>
<keyword id="KW-0007">Acetylation</keyword>
<keyword id="KW-0067">ATP-binding</keyword>
<keyword id="KW-0963">Cytoplasm</keyword>
<keyword id="KW-0206">Cytoskeleton</keyword>
<keyword id="KW-0378">Hydrolase</keyword>
<keyword id="KW-0488">Methylation</keyword>
<keyword id="KW-0547">Nucleotide-binding</keyword>
<keyword id="KW-0539">Nucleus</keyword>
<keyword id="KW-0558">Oxidation</keyword>
<keyword id="KW-1185">Reference proteome</keyword>
<keyword id="KW-0832">Ubl conjugation</keyword>
<comment type="function">
    <text evidence="1 4">Actin is a highly conserved protein that polymerizes to produce filaments that form cross-linked networks in the cytoplasm of cells (By similarity). Actin exists in both monomeric (G-actin) and polymeric (F-actin) forms, both forms playing key functions, such as cell motility and contraction (By similarity). In addition to their role in the cytoplasmic cytoskeleton, G- and F-actin also localize in the nucleus, and regulate gene transcription and motility and repair of damaged DNA (By similarity). Plays a role in the assembly of the gamma-tubulin ring complex (gTuRC), which regulates the minus-end nucleation of alpha-beta tubulin heterodimers that grow into microtubule protafilaments (By similarity). Part of the ACTR1A/ACTB filament around which the dynactin complex is built (By similarity). The dynactin multiprotein complex activates the molecular motor dynein for ultra-processive transport along microtubules (By similarity).</text>
</comment>
<comment type="catalytic activity">
    <reaction evidence="3">
        <text>ATP + H2O = ADP + phosphate + H(+)</text>
        <dbReference type="Rhea" id="RHEA:13065"/>
        <dbReference type="ChEBI" id="CHEBI:15377"/>
        <dbReference type="ChEBI" id="CHEBI:15378"/>
        <dbReference type="ChEBI" id="CHEBI:30616"/>
        <dbReference type="ChEBI" id="CHEBI:43474"/>
        <dbReference type="ChEBI" id="CHEBI:456216"/>
    </reaction>
</comment>
<comment type="subunit">
    <text evidence="1 2 4 5">Polymerization of globular actin (G-actin) leads to a structural filament (F-actin) in the form of a two-stranded helix (By similarity). Each actin can bind to 4 others (By similarity). Identified in a IGF2BP1-dependent mRNP granule complex containing untranslated mRNAs (By similarity). Component of the BAF complex, which includes at least actin (ACTB), ARID1A, ARID1B/BAF250, SMARCA2, SMARCA4/BRG1, ACTL6A/BAF53, ACTL6B/BAF53B, SMARCE1/BAF57 SMARCC1/BAF155, SMARCC2/BAF170, SMARCB1/SNF5/INI1, and one or more of SMARCD1/BAF60A, SMARCD2/BAF60B, or SMARCD3/BAF60C (By similarity). In muscle cells, the BAF complex also contains DPF3 (By similarity). Found in a complex with XPO6, Ran, ACTB and PFN1 (By similarity). Interacts with PFN1 (By similarity). Interacts with XPO6 and EMD (By similarity). Interacts with ERBB2 (By similarity). Interacts with GCSAM (By similarity). Interacts with TBC1D21 (By similarity). Interacts with CPNE1 (via VWFA domain) and CPNE4 (via VWFA domain) (By similarity). Interacts with DHX9 (via C-terminus); this interaction is direct and mediates the attachment to nuclear ribonucleoprotein complexes (By similarity). Interacts with FAM107A (By similarity). Associates with the gamma-tubulin ring complex (gTuRC) consisting of TUBGCP2, TUBGCP3, TUBGCP4, TUBGCP5 and TUBGCP6 and gamma-tubulin TUBG1 or TUBG2; within the complex, interacts with TUBGCP3 and TUBGCP6 to form a luminal bridge with MZT1 that stabilizes the initial structure during complex assembly (By similarity). Part of the ACTR1A/ACTB filament around which the dynactin complex is built (By similarity). The filament contains 8 copies of ACTR1A and 1 ACTB (By similarity). Interacts with TPRN which forms ring-like structures in the stereocilium taper region; the interaction may stabilize stereocilia in inner ear hair cells (By similarity). Interacts with AMOTL2 (via N-terminus), the interaction facilitates binding of cell junction complexes to actin fibers in endothelial cells (PubMed:28842668).</text>
</comment>
<comment type="subcellular location">
    <subcellularLocation>
        <location evidence="1">Cytoplasm</location>
        <location evidence="1">Cytoskeleton</location>
    </subcellularLocation>
    <subcellularLocation>
        <location evidence="1">Nucleus</location>
    </subcellularLocation>
    <text evidence="1">Localized in cytoplasmic mRNP granules containing untranslated mRNAs.</text>
</comment>
<comment type="PTM">
    <molecule>Actin, cytoplasmic 1</molecule>
    <text evidence="1">N-terminal cleavage of acetylated methionine of immature cytoplasmic actin by ACTMAP.</text>
</comment>
<comment type="PTM">
    <text evidence="1">ISGylated.</text>
</comment>
<comment type="PTM">
    <text evidence="2">Oxidation of Met-44 and Met-47 by MICALs (MICAL1, MICAL2 or MICAL3) to form methionine sulfoxide promotes actin filament depolymerization. MICAL1 and MICAL2 produce the (R)-S-oxide form. The (R)-S-oxide form is reverted by MSRB1 and MSRB2, which promote actin repolymerization.</text>
</comment>
<comment type="PTM">
    <text evidence="1">Monomethylation at Lys-84 (K84me1) regulates actin-myosin interaction and actomyosin-dependent processes. Demethylation by ALKBH4 is required for maintaining actomyosin dynamics supporting normal cleavage furrow ingression during cytokinesis and cell migration.</text>
</comment>
<comment type="PTM">
    <molecule>Actin, cytoplasmic 1, N-terminally processed</molecule>
    <text evidence="1">N-terminal acetylation by NAA80 affects actin filament depolymerization and elongation, including elongation driven by formins. In contrast, filament nucleation by the Arp2/3 complex is not affected.</text>
</comment>
<comment type="PTM">
    <text evidence="1 2">Methylated at His-73 by SETD3 (By similarity). Methylation at His-73 is required for smooth muscle contraction of the laboring uterus during delivery (By similarity).</text>
</comment>
<comment type="miscellaneous">
    <text evidence="1">In vertebrates 3 main groups of actin isoforms, alpha, beta and gamma have been identified. The alpha actins are found in muscle tissues and are a major constituent of the contractile apparatus. The beta and gamma actins coexist in most cell types as components of the cytoskeleton and as mediators of internal cell motility.</text>
</comment>
<comment type="similarity">
    <text evidence="6">Belongs to the actin family.</text>
</comment>
<evidence type="ECO:0000250" key="1">
    <source>
        <dbReference type="UniProtKB" id="P60709"/>
    </source>
</evidence>
<evidence type="ECO:0000250" key="2">
    <source>
        <dbReference type="UniProtKB" id="P60710"/>
    </source>
</evidence>
<evidence type="ECO:0000250" key="3">
    <source>
        <dbReference type="UniProtKB" id="P68137"/>
    </source>
</evidence>
<evidence type="ECO:0000250" key="4">
    <source>
        <dbReference type="UniProtKB" id="Q6QAQ1"/>
    </source>
</evidence>
<evidence type="ECO:0000269" key="5">
    <source>
    </source>
</evidence>
<evidence type="ECO:0000305" key="6"/>
<organism>
    <name type="scientific">Canis lupus familiaris</name>
    <name type="common">Dog</name>
    <name type="synonym">Canis familiaris</name>
    <dbReference type="NCBI Taxonomy" id="9615"/>
    <lineage>
        <taxon>Eukaryota</taxon>
        <taxon>Metazoa</taxon>
        <taxon>Chordata</taxon>
        <taxon>Craniata</taxon>
        <taxon>Vertebrata</taxon>
        <taxon>Euteleostomi</taxon>
        <taxon>Mammalia</taxon>
        <taxon>Eutheria</taxon>
        <taxon>Laurasiatheria</taxon>
        <taxon>Carnivora</taxon>
        <taxon>Caniformia</taxon>
        <taxon>Canidae</taxon>
        <taxon>Canis</taxon>
    </lineage>
</organism>
<gene>
    <name type="primary">ACTB</name>
</gene>
<protein>
    <recommendedName>
        <fullName>Actin, cytoplasmic 1</fullName>
        <ecNumber evidence="3">3.6.4.-</ecNumber>
    </recommendedName>
    <alternativeName>
        <fullName>Beta-actin</fullName>
    </alternativeName>
    <component>
        <recommendedName>
            <fullName>Actin, cytoplasmic 1, N-terminally processed</fullName>
        </recommendedName>
    </component>
</protein>
<proteinExistence type="evidence at protein level"/>
<sequence length="375" mass="41737">MDDDIAALVVDNGSGMCKAGFAGDDAPRAVFPSIVGRPRHQGVMVGMGQKDSYVGDEAQSKRGILTLKYPIEHGIVTNWDDMEKIWHHTFYNELRVAPEEHPVLLTEAPLNPKANREKMTQIMFETFNTPAMYVAIQAVLSLYASGRTTGIVMDSGDGVTHTVPIYEGYALPHAILRLDLAGRDLTDYLMKILTERGYSFTTTAEREIVRDIKEKLCYVALDFEQEMATAASSSSLEKSYELPDGQVITIGNERFRCPEALFQPSFLGMESCGIHETTFNSIMKCDVDIRKDLYANTVLSGGTTMYPGIADRMQKEITALAPSTMKIKIIAPPERKYSVWIGGSILASLSTFQQMWISKQEYDESGPSIVHRKCF</sequence>
<feature type="chain" id="PRO_0000000761" description="Actin, cytoplasmic 1">
    <location>
        <begin position="1"/>
        <end position="375"/>
    </location>
</feature>
<feature type="initiator methionine" description="Removed; alternate" evidence="1">
    <location>
        <position position="1"/>
    </location>
</feature>
<feature type="chain" id="PRO_0000367068" description="Actin, cytoplasmic 1, N-terminally processed">
    <location>
        <begin position="2"/>
        <end position="375"/>
    </location>
</feature>
<feature type="modified residue" description="N-acetylmethionine" evidence="1">
    <location>
        <position position="1"/>
    </location>
</feature>
<feature type="modified residue" description="N-acetylaspartate; in Actin, cytoplasmic 1, N-terminally processed" evidence="1">
    <location>
        <position position="2"/>
    </location>
</feature>
<feature type="modified residue" description="Methionine (R)-sulfoxide" evidence="2">
    <location>
        <position position="44"/>
    </location>
</feature>
<feature type="modified residue" description="Methionine (R)-sulfoxide" evidence="2">
    <location>
        <position position="47"/>
    </location>
</feature>
<feature type="modified residue" description="Tele-methylhistidine" evidence="2">
    <location>
        <position position="73"/>
    </location>
</feature>
<feature type="modified residue" description="N6-methyllysine" evidence="1">
    <location>
        <position position="84"/>
    </location>
</feature>
<feature type="sequence conflict" description="In Ref. 1; AAB71610." evidence="6" ref="1">
    <original>D</original>
    <variation>E</variation>
    <location>
        <position position="4"/>
    </location>
</feature>
<feature type="sequence conflict" description="In Ref. 1; AAB71610." evidence="6" ref="1">
    <original>G</original>
    <variation>R</variation>
    <location>
        <position position="46"/>
    </location>
</feature>
<feature type="sequence conflict" description="In Ref. 1; AAB71610." evidence="6" ref="1">
    <original>H</original>
    <variation>A</variation>
    <location>
        <position position="101"/>
    </location>
</feature>
<feature type="sequence conflict" description="In Ref. 3; CAA93907." evidence="6" ref="3">
    <original>A</original>
    <variation>T</variation>
    <location>
        <position position="131"/>
    </location>
</feature>
<feature type="sequence conflict" description="In Ref. 1; AAB71610." evidence="6" ref="1">
    <original>KLCYVALDFEQEMATA</original>
    <variation>EALLRRPGLRAGDGHG</variation>
    <location>
        <begin position="215"/>
        <end position="230"/>
    </location>
</feature>
<feature type="sequence conflict" description="In Ref. 1; AAB71610." evidence="6" ref="1">
    <original>E</original>
    <variation>K</variation>
    <location>
        <position position="259"/>
    </location>
</feature>
<feature type="sequence conflict" description="In Ref. 1; AAB71610." evidence="6" ref="1">
    <original>ST</original>
    <variation>AR</variation>
    <location>
        <begin position="323"/>
        <end position="324"/>
    </location>
</feature>
<accession>O18840</accession>
<accession>Q11209</accession>
<accession>Q8SPX4</accession>
<accession>Q95164</accession>
<reference key="1">
    <citation type="submission" date="1999-07" db="EMBL/GenBank/DDBJ databases">
        <authorList>
            <person name="Ortiz-Garcia D.M."/>
            <person name="Guaderrama M."/>
            <person name="Salgado L.M."/>
            <person name="Meza I."/>
        </authorList>
    </citation>
    <scope>NUCLEOTIDE SEQUENCE [MRNA]</scope>
    <source>
        <strain>Cocker spaniel</strain>
        <tissue>Kidney</tissue>
    </source>
</reference>
<reference key="2">
    <citation type="submission" date="2002-02" db="EMBL/GenBank/DDBJ databases">
        <title>Cloning of the beta-actin gene from dog heart.</title>
        <authorList>
            <person name="Tiwari N."/>
            <person name="Mishra S."/>
            <person name="Rastogi S."/>
            <person name="Sabbah H.N."/>
            <person name="Gupta R.C."/>
        </authorList>
    </citation>
    <scope>NUCLEOTIDE SEQUENCE [MRNA] OF 1-189</scope>
    <source>
        <tissue>Heart</tissue>
    </source>
</reference>
<reference key="3">
    <citation type="submission" date="1996-03" db="EMBL/GenBank/DDBJ databases">
        <title>Expression of canine TNF, IL-1 and IL-6 mRNAs in peripheral blood monocytes and cell lines.</title>
        <authorList>
            <person name="Gilmore W.H."/>
            <person name="Carter S.D."/>
            <person name="Bennett M."/>
            <person name="Barnes A."/>
            <person name="Kelly D.F."/>
        </authorList>
    </citation>
    <scope>NUCLEOTIDE SEQUENCE [MRNA] OF 23-206</scope>
    <source>
        <strain>Beagle</strain>
        <tissue>Blood</tissue>
    </source>
</reference>
<reference key="4">
    <citation type="journal article" date="1996" name="Proc. Natl. Acad. Sci. U.S.A.">
        <title>Local stress, not systemic factors, regulate gene expression of the cardiac renin-angiotensin system in vivo: a comprehensive study of all its components in the dog.</title>
        <authorList>
            <person name="Lee Y.A."/>
            <person name="Liang C.S."/>
            <person name="Lee M.A."/>
            <person name="Lindpaintner K."/>
        </authorList>
    </citation>
    <scope>NUCLEOTIDE SEQUENCE [MRNA] OF 282-341</scope>
</reference>
<reference key="5">
    <citation type="journal article" date="2017" name="Sci. Rep.">
        <title>The E-cadherin/AmotL2 complex organizes actin filaments required for epithelial hexagonal packing and blastocyst hatching.</title>
        <authorList>
            <person name="Hildebrand S."/>
            <person name="Hultin S."/>
            <person name="Subramani A."/>
            <person name="Petropoulos S."/>
            <person name="Zhang Y."/>
            <person name="Cao X."/>
            <person name="Mpindi J."/>
            <person name="Kalloniemi O."/>
            <person name="Johansson S."/>
            <person name="Majumdar A."/>
            <person name="Lanner F."/>
            <person name="Holmgren L."/>
        </authorList>
    </citation>
    <scope>INTERACTION WITH AMOTL2</scope>
</reference>
<dbReference type="EC" id="3.6.4.-" evidence="3"/>
<dbReference type="EMBL" id="AF021873">
    <property type="protein sequence ID" value="AAB71610.2"/>
    <property type="molecule type" value="mRNA"/>
</dbReference>
<dbReference type="EMBL" id="AF484115">
    <property type="protein sequence ID" value="AAL92020.1"/>
    <property type="molecule type" value="mRNA"/>
</dbReference>
<dbReference type="EMBL" id="Z70044">
    <property type="protein sequence ID" value="CAA93907.1"/>
    <property type="molecule type" value="mRNA"/>
</dbReference>
<dbReference type="EMBL" id="U67202">
    <property type="protein sequence ID" value="AAC48640.1"/>
    <property type="molecule type" value="mRNA"/>
</dbReference>
<dbReference type="RefSeq" id="NP_001182774.2">
    <property type="nucleotide sequence ID" value="NM_001195845.3"/>
</dbReference>
<dbReference type="SMR" id="O18840"/>
<dbReference type="FunCoup" id="O18840">
    <property type="interactions" value="1890"/>
</dbReference>
<dbReference type="IntAct" id="O18840">
    <property type="interactions" value="2"/>
</dbReference>
<dbReference type="MINT" id="O18840"/>
<dbReference type="STRING" id="9615.ENSCAFP00000022281"/>
<dbReference type="PaxDb" id="9612-ENSCAFP00000023597"/>
<dbReference type="Ensembl" id="ENSCAFT00000095294.1">
    <property type="protein sequence ID" value="ENSCAFP00000070372.1"/>
    <property type="gene ID" value="ENSCAFG00000016020.6"/>
</dbReference>
<dbReference type="Ensembl" id="ENSCAFT00030028371.1">
    <property type="protein sequence ID" value="ENSCAFP00030024748.1"/>
    <property type="gene ID" value="ENSCAFG00030015381.1"/>
</dbReference>
<dbReference type="Ensembl" id="ENSCAFT00040028964.1">
    <property type="protein sequence ID" value="ENSCAFP00040025226.1"/>
    <property type="gene ID" value="ENSCAFG00040015695.1"/>
</dbReference>
<dbReference type="GeneID" id="403580"/>
<dbReference type="KEGG" id="cfa:403580"/>
<dbReference type="CTD" id="60"/>
<dbReference type="eggNOG" id="KOG0676">
    <property type="taxonomic scope" value="Eukaryota"/>
</dbReference>
<dbReference type="HOGENOM" id="CLU_027965_0_2_1"/>
<dbReference type="InParanoid" id="O18840"/>
<dbReference type="OMA" id="FHTTAER"/>
<dbReference type="OrthoDB" id="5132116at2759"/>
<dbReference type="TreeFam" id="TF354237"/>
<dbReference type="Reactome" id="R-CFA-190873">
    <property type="pathway name" value="Gap junction degradation"/>
</dbReference>
<dbReference type="Reactome" id="R-CFA-196025">
    <property type="pathway name" value="Formation of annular gap junctions"/>
</dbReference>
<dbReference type="Reactome" id="R-CFA-2029482">
    <property type="pathway name" value="Regulation of actin dynamics for phagocytic cup formation"/>
</dbReference>
<dbReference type="Reactome" id="R-CFA-3928662">
    <property type="pathway name" value="EPHB-mediated forward signaling"/>
</dbReference>
<dbReference type="Reactome" id="R-CFA-3928665">
    <property type="pathway name" value="EPH-ephrin mediated repulsion of cells"/>
</dbReference>
<dbReference type="Reactome" id="R-CFA-446353">
    <property type="pathway name" value="Cell-extracellular matrix interactions"/>
</dbReference>
<dbReference type="Reactome" id="R-CFA-5250924">
    <property type="pathway name" value="B-WICH complex positively regulates rRNA expression"/>
</dbReference>
<dbReference type="Reactome" id="R-CFA-5626467">
    <property type="pathway name" value="RHO GTPases activate IQGAPs"/>
</dbReference>
<dbReference type="Reactome" id="R-CFA-5663213">
    <property type="pathway name" value="RHO GTPases Activate WASPs and WAVEs"/>
</dbReference>
<dbReference type="Reactome" id="R-CFA-5663220">
    <property type="pathway name" value="RHO GTPases Activate Formins"/>
</dbReference>
<dbReference type="Reactome" id="R-CFA-5674135">
    <property type="pathway name" value="MAP2K and MAPK activation"/>
</dbReference>
<dbReference type="Reactome" id="R-CFA-5689603">
    <property type="pathway name" value="UCH proteinases"/>
</dbReference>
<dbReference type="Reactome" id="R-CFA-5696394">
    <property type="pathway name" value="DNA Damage Recognition in GG-NER"/>
</dbReference>
<dbReference type="Reactome" id="R-CFA-8856828">
    <property type="pathway name" value="Clathrin-mediated endocytosis"/>
</dbReference>
<dbReference type="Reactome" id="R-CFA-9035034">
    <property type="pathway name" value="RHOF GTPase cycle"/>
</dbReference>
<dbReference type="Reactome" id="R-CFA-9913351">
    <property type="pathway name" value="Formation of the dystrophin-glycoprotein complex (DGC)"/>
</dbReference>
<dbReference type="Proteomes" id="UP000002254">
    <property type="component" value="Chromosome 6"/>
</dbReference>
<dbReference type="Proteomes" id="UP000694429">
    <property type="component" value="Chromosome 6"/>
</dbReference>
<dbReference type="Proteomes" id="UP000694542">
    <property type="component" value="Chromosome 6"/>
</dbReference>
<dbReference type="Proteomes" id="UP000805418">
    <property type="component" value="Unplaced"/>
</dbReference>
<dbReference type="GO" id="GO:0015629">
    <property type="term" value="C:actin cytoskeleton"/>
    <property type="evidence" value="ECO:0000250"/>
    <property type="project" value="UniProtKB"/>
</dbReference>
<dbReference type="GO" id="GO:0005856">
    <property type="term" value="C:cytoskeleton"/>
    <property type="evidence" value="ECO:0000250"/>
    <property type="project" value="AgBase"/>
</dbReference>
<dbReference type="GO" id="GO:0097433">
    <property type="term" value="C:dense body"/>
    <property type="evidence" value="ECO:0000250"/>
    <property type="project" value="AgBase"/>
</dbReference>
<dbReference type="GO" id="GO:0005925">
    <property type="term" value="C:focal adhesion"/>
    <property type="evidence" value="ECO:0000250"/>
    <property type="project" value="AgBase"/>
</dbReference>
<dbReference type="GO" id="GO:0005634">
    <property type="term" value="C:nucleus"/>
    <property type="evidence" value="ECO:0000250"/>
    <property type="project" value="UniProtKB"/>
</dbReference>
<dbReference type="GO" id="GO:0005886">
    <property type="term" value="C:plasma membrane"/>
    <property type="evidence" value="ECO:0000250"/>
    <property type="project" value="AgBase"/>
</dbReference>
<dbReference type="GO" id="GO:0032991">
    <property type="term" value="C:protein-containing complex"/>
    <property type="evidence" value="ECO:0000250"/>
    <property type="project" value="UniProtKB"/>
</dbReference>
<dbReference type="GO" id="GO:0005524">
    <property type="term" value="F:ATP binding"/>
    <property type="evidence" value="ECO:0007669"/>
    <property type="project" value="UniProtKB-KW"/>
</dbReference>
<dbReference type="GO" id="GO:0016787">
    <property type="term" value="F:hydrolase activity"/>
    <property type="evidence" value="ECO:0007669"/>
    <property type="project" value="UniProtKB-KW"/>
</dbReference>
<dbReference type="CDD" id="cd10224">
    <property type="entry name" value="ASKHA_NBD_actin"/>
    <property type="match status" value="1"/>
</dbReference>
<dbReference type="FunFam" id="3.30.420.40:FF:000131">
    <property type="entry name" value="Actin, alpha skeletal muscle"/>
    <property type="match status" value="1"/>
</dbReference>
<dbReference type="FunFam" id="3.30.420.40:FF:000291">
    <property type="entry name" value="Actin, alpha skeletal muscle"/>
    <property type="match status" value="1"/>
</dbReference>
<dbReference type="FunFam" id="3.90.640.10:FF:000047">
    <property type="entry name" value="Actin, alpha skeletal muscle"/>
    <property type="match status" value="1"/>
</dbReference>
<dbReference type="FunFam" id="3.30.420.40:FF:000058">
    <property type="entry name" value="Putative actin-related protein 5"/>
    <property type="match status" value="1"/>
</dbReference>
<dbReference type="Gene3D" id="3.30.420.40">
    <property type="match status" value="2"/>
</dbReference>
<dbReference type="Gene3D" id="3.90.640.10">
    <property type="entry name" value="Actin, Chain A, domain 4"/>
    <property type="match status" value="1"/>
</dbReference>
<dbReference type="InterPro" id="IPR004000">
    <property type="entry name" value="Actin"/>
</dbReference>
<dbReference type="InterPro" id="IPR020902">
    <property type="entry name" value="Actin/actin-like_CS"/>
</dbReference>
<dbReference type="InterPro" id="IPR004001">
    <property type="entry name" value="Actin_CS"/>
</dbReference>
<dbReference type="InterPro" id="IPR043129">
    <property type="entry name" value="ATPase_NBD"/>
</dbReference>
<dbReference type="PANTHER" id="PTHR11937">
    <property type="entry name" value="ACTIN"/>
    <property type="match status" value="1"/>
</dbReference>
<dbReference type="Pfam" id="PF00022">
    <property type="entry name" value="Actin"/>
    <property type="match status" value="1"/>
</dbReference>
<dbReference type="PRINTS" id="PR00190">
    <property type="entry name" value="ACTIN"/>
</dbReference>
<dbReference type="SMART" id="SM00268">
    <property type="entry name" value="ACTIN"/>
    <property type="match status" value="1"/>
</dbReference>
<dbReference type="SUPFAM" id="SSF53067">
    <property type="entry name" value="Actin-like ATPase domain"/>
    <property type="match status" value="2"/>
</dbReference>
<dbReference type="PROSITE" id="PS00406">
    <property type="entry name" value="ACTINS_1"/>
    <property type="match status" value="1"/>
</dbReference>
<dbReference type="PROSITE" id="PS00432">
    <property type="entry name" value="ACTINS_2"/>
    <property type="match status" value="1"/>
</dbReference>
<dbReference type="PROSITE" id="PS01132">
    <property type="entry name" value="ACTINS_ACT_LIKE"/>
    <property type="match status" value="1"/>
</dbReference>